<organism>
    <name type="scientific">Staphylococcus saprophyticus subsp. saprophyticus (strain ATCC 15305 / DSM 20229 / NCIMB 8711 / NCTC 7292 / S-41)</name>
    <dbReference type="NCBI Taxonomy" id="342451"/>
    <lineage>
        <taxon>Bacteria</taxon>
        <taxon>Bacillati</taxon>
        <taxon>Bacillota</taxon>
        <taxon>Bacilli</taxon>
        <taxon>Bacillales</taxon>
        <taxon>Staphylococcaceae</taxon>
        <taxon>Staphylococcus</taxon>
    </lineage>
</organism>
<name>HPRK_STAS1</name>
<comment type="function">
    <text evidence="1">Catalyzes the ATP- as well as the pyrophosphate-dependent phosphorylation of a specific serine residue in HPr, a phosphocarrier protein of the phosphoenolpyruvate-dependent sugar phosphotransferase system (PTS). HprK/P also catalyzes the pyrophosphate-producing, inorganic phosphate-dependent dephosphorylation (phosphorolysis) of seryl-phosphorylated HPr (P-Ser-HPr). The two antagonistic activities of HprK/P are regulated by several intracellular metabolites, which change their concentration in response to the absence or presence of rapidly metabolisable carbon sources (glucose, fructose, etc.) in the growth medium. Therefore, by controlling the phosphorylation state of HPr, HPrK/P is a sensor enzyme that plays a major role in the regulation of carbon metabolism and sugar transport: it mediates carbon catabolite repression (CCR), and regulates PTS-catalyzed carbohydrate uptake and inducer exclusion.</text>
</comment>
<comment type="catalytic activity">
    <reaction evidence="1">
        <text>[HPr protein]-L-serine + ATP = [HPr protein]-O-phospho-L-serine + ADP + H(+)</text>
        <dbReference type="Rhea" id="RHEA:46600"/>
        <dbReference type="Rhea" id="RHEA-COMP:11602"/>
        <dbReference type="Rhea" id="RHEA-COMP:11603"/>
        <dbReference type="ChEBI" id="CHEBI:15378"/>
        <dbReference type="ChEBI" id="CHEBI:29999"/>
        <dbReference type="ChEBI" id="CHEBI:30616"/>
        <dbReference type="ChEBI" id="CHEBI:83421"/>
        <dbReference type="ChEBI" id="CHEBI:456216"/>
    </reaction>
</comment>
<comment type="catalytic activity">
    <reaction evidence="1">
        <text>[HPr protein]-O-phospho-L-serine + phosphate + H(+) = [HPr protein]-L-serine + diphosphate</text>
        <dbReference type="Rhea" id="RHEA:46604"/>
        <dbReference type="Rhea" id="RHEA-COMP:11602"/>
        <dbReference type="Rhea" id="RHEA-COMP:11603"/>
        <dbReference type="ChEBI" id="CHEBI:15378"/>
        <dbReference type="ChEBI" id="CHEBI:29999"/>
        <dbReference type="ChEBI" id="CHEBI:33019"/>
        <dbReference type="ChEBI" id="CHEBI:43474"/>
        <dbReference type="ChEBI" id="CHEBI:83421"/>
    </reaction>
</comment>
<comment type="cofactor">
    <cofactor evidence="1">
        <name>Mg(2+)</name>
        <dbReference type="ChEBI" id="CHEBI:18420"/>
    </cofactor>
</comment>
<comment type="subunit">
    <text evidence="1">Homohexamer.</text>
</comment>
<comment type="domain">
    <text evidence="1">The Walker A ATP-binding motif also binds Pi and PPi.</text>
</comment>
<comment type="miscellaneous">
    <text evidence="1">Both phosphorylation and phosphorolysis are carried out by the same active site and suggest a common mechanism for both reactions.</text>
</comment>
<comment type="similarity">
    <text evidence="1">Belongs to the HPrK/P family.</text>
</comment>
<proteinExistence type="inferred from homology"/>
<sequence>MLTTQSLVERFKLEVITGEAGLNKQIKNTDISRPGLEMAGYFSHYASDRIQLLGTTELSFYNLLPDEERKGRMRKLCRPETPAIIVTRDLEPPEELIEAAKENETPLITSTIATTQLMSRLTTFLEHELARTTSLHGVLVDVYGVGVLITGDSGIGKSETALELIKRGHRLVADDNVEIREISKDELTGRAPKLIEHLLEIRGLGIINVMTLFGAGSILTEKRLRLNIHLENWHKEKLYDRVGLNEETLRILDTEITKKTIPVRPGRNVAVIIEVAAMNYRLNIMGINTAEEFNERLNAEILRNGNHSEGNNQ</sequence>
<keyword id="KW-0067">ATP-binding</keyword>
<keyword id="KW-0119">Carbohydrate metabolism</keyword>
<keyword id="KW-0418">Kinase</keyword>
<keyword id="KW-0460">Magnesium</keyword>
<keyword id="KW-0479">Metal-binding</keyword>
<keyword id="KW-0511">Multifunctional enzyme</keyword>
<keyword id="KW-0547">Nucleotide-binding</keyword>
<keyword id="KW-1185">Reference proteome</keyword>
<keyword id="KW-0723">Serine/threonine-protein kinase</keyword>
<keyword id="KW-0808">Transferase</keyword>
<gene>
    <name evidence="1" type="primary">hprK</name>
    <name type="ordered locus">SSP1957</name>
</gene>
<accession>Q49VV8</accession>
<feature type="chain" id="PRO_0000058990" description="HPr kinase/phosphorylase">
    <location>
        <begin position="1"/>
        <end position="313"/>
    </location>
</feature>
<feature type="region of interest" description="Important for the catalytic mechanism of both phosphorylation and dephosphorylation" evidence="1">
    <location>
        <begin position="199"/>
        <end position="208"/>
    </location>
</feature>
<feature type="region of interest" description="Important for the catalytic mechanism of dephosphorylation" evidence="1">
    <location>
        <begin position="262"/>
        <end position="267"/>
    </location>
</feature>
<feature type="active site" evidence="1">
    <location>
        <position position="136"/>
    </location>
</feature>
<feature type="active site" evidence="1">
    <location>
        <position position="157"/>
    </location>
</feature>
<feature type="active site" description="Proton acceptor; for phosphorylation activity. Proton donor; for dephosphorylation activity" evidence="1">
    <location>
        <position position="175"/>
    </location>
</feature>
<feature type="active site" evidence="1">
    <location>
        <position position="241"/>
    </location>
</feature>
<feature type="binding site" evidence="1">
    <location>
        <begin position="151"/>
        <end position="158"/>
    </location>
    <ligand>
        <name>ATP</name>
        <dbReference type="ChEBI" id="CHEBI:30616"/>
    </ligand>
</feature>
<feature type="binding site" evidence="1">
    <location>
        <position position="158"/>
    </location>
    <ligand>
        <name>Mg(2+)</name>
        <dbReference type="ChEBI" id="CHEBI:18420"/>
    </ligand>
</feature>
<feature type="binding site" evidence="1">
    <location>
        <position position="200"/>
    </location>
    <ligand>
        <name>Mg(2+)</name>
        <dbReference type="ChEBI" id="CHEBI:18420"/>
    </ligand>
</feature>
<reference key="1">
    <citation type="journal article" date="2005" name="Proc. Natl. Acad. Sci. U.S.A.">
        <title>Whole genome sequence of Staphylococcus saprophyticus reveals the pathogenesis of uncomplicated urinary tract infection.</title>
        <authorList>
            <person name="Kuroda M."/>
            <person name="Yamashita A."/>
            <person name="Hirakawa H."/>
            <person name="Kumano M."/>
            <person name="Morikawa K."/>
            <person name="Higashide M."/>
            <person name="Maruyama A."/>
            <person name="Inose Y."/>
            <person name="Matoba K."/>
            <person name="Toh H."/>
            <person name="Kuhara S."/>
            <person name="Hattori M."/>
            <person name="Ohta T."/>
        </authorList>
    </citation>
    <scope>NUCLEOTIDE SEQUENCE [LARGE SCALE GENOMIC DNA]</scope>
    <source>
        <strain>ATCC 15305 / DSM 20229 / NCIMB 8711 / NCTC 7292 / S-41</strain>
    </source>
</reference>
<protein>
    <recommendedName>
        <fullName evidence="1">HPr kinase/phosphorylase</fullName>
        <shortName evidence="1">HPrK/P</shortName>
        <ecNumber evidence="1">2.7.11.-</ecNumber>
        <ecNumber evidence="1">2.7.4.-</ecNumber>
    </recommendedName>
    <alternativeName>
        <fullName evidence="1">HPr(Ser) kinase/phosphorylase</fullName>
    </alternativeName>
</protein>
<evidence type="ECO:0000255" key="1">
    <source>
        <dbReference type="HAMAP-Rule" id="MF_01249"/>
    </source>
</evidence>
<dbReference type="EC" id="2.7.11.-" evidence="1"/>
<dbReference type="EC" id="2.7.4.-" evidence="1"/>
<dbReference type="EMBL" id="AP008934">
    <property type="protein sequence ID" value="BAE19102.1"/>
    <property type="molecule type" value="Genomic_DNA"/>
</dbReference>
<dbReference type="RefSeq" id="WP_011303626.1">
    <property type="nucleotide sequence ID" value="NZ_MTGA01000039.1"/>
</dbReference>
<dbReference type="SMR" id="Q49VV8"/>
<dbReference type="GeneID" id="3616768"/>
<dbReference type="KEGG" id="ssp:SSP1957"/>
<dbReference type="PATRIC" id="fig|342451.11.peg.1950"/>
<dbReference type="eggNOG" id="COG1493">
    <property type="taxonomic scope" value="Bacteria"/>
</dbReference>
<dbReference type="HOGENOM" id="CLU_052030_0_1_9"/>
<dbReference type="OrthoDB" id="9778803at2"/>
<dbReference type="Proteomes" id="UP000006371">
    <property type="component" value="Chromosome"/>
</dbReference>
<dbReference type="GO" id="GO:0005524">
    <property type="term" value="F:ATP binding"/>
    <property type="evidence" value="ECO:0007669"/>
    <property type="project" value="UniProtKB-UniRule"/>
</dbReference>
<dbReference type="GO" id="GO:0000287">
    <property type="term" value="F:magnesium ion binding"/>
    <property type="evidence" value="ECO:0007669"/>
    <property type="project" value="UniProtKB-UniRule"/>
</dbReference>
<dbReference type="GO" id="GO:0000155">
    <property type="term" value="F:phosphorelay sensor kinase activity"/>
    <property type="evidence" value="ECO:0007669"/>
    <property type="project" value="InterPro"/>
</dbReference>
<dbReference type="GO" id="GO:0004674">
    <property type="term" value="F:protein serine/threonine kinase activity"/>
    <property type="evidence" value="ECO:0007669"/>
    <property type="project" value="UniProtKB-KW"/>
</dbReference>
<dbReference type="GO" id="GO:0004712">
    <property type="term" value="F:protein serine/threonine/tyrosine kinase activity"/>
    <property type="evidence" value="ECO:0007669"/>
    <property type="project" value="UniProtKB-UniRule"/>
</dbReference>
<dbReference type="GO" id="GO:0006109">
    <property type="term" value="P:regulation of carbohydrate metabolic process"/>
    <property type="evidence" value="ECO:0007669"/>
    <property type="project" value="UniProtKB-UniRule"/>
</dbReference>
<dbReference type="CDD" id="cd01918">
    <property type="entry name" value="HprK_C"/>
    <property type="match status" value="1"/>
</dbReference>
<dbReference type="FunFam" id="3.40.1390.20:FF:000002">
    <property type="entry name" value="HPr kinase/phosphorylase"/>
    <property type="match status" value="1"/>
</dbReference>
<dbReference type="FunFam" id="3.40.50.300:FF:000174">
    <property type="entry name" value="HPr kinase/phosphorylase"/>
    <property type="match status" value="1"/>
</dbReference>
<dbReference type="Gene3D" id="3.40.1390.20">
    <property type="entry name" value="HprK N-terminal domain-like"/>
    <property type="match status" value="1"/>
</dbReference>
<dbReference type="Gene3D" id="3.40.50.300">
    <property type="entry name" value="P-loop containing nucleotide triphosphate hydrolases"/>
    <property type="match status" value="1"/>
</dbReference>
<dbReference type="HAMAP" id="MF_01249">
    <property type="entry name" value="HPr_kinase"/>
    <property type="match status" value="1"/>
</dbReference>
<dbReference type="InterPro" id="IPR003755">
    <property type="entry name" value="HPr(Ser)_kin/Pase"/>
</dbReference>
<dbReference type="InterPro" id="IPR011104">
    <property type="entry name" value="Hpr_kin/Pase_C"/>
</dbReference>
<dbReference type="InterPro" id="IPR011126">
    <property type="entry name" value="Hpr_kin/Pase_Hpr_N"/>
</dbReference>
<dbReference type="InterPro" id="IPR027417">
    <property type="entry name" value="P-loop_NTPase"/>
</dbReference>
<dbReference type="InterPro" id="IPR028979">
    <property type="entry name" value="Ser_kin/Pase_Hpr-like_N_sf"/>
</dbReference>
<dbReference type="NCBIfam" id="TIGR00679">
    <property type="entry name" value="hpr-ser"/>
    <property type="match status" value="1"/>
</dbReference>
<dbReference type="PANTHER" id="PTHR30305:SF1">
    <property type="entry name" value="HPR KINASE_PHOSPHORYLASE"/>
    <property type="match status" value="1"/>
</dbReference>
<dbReference type="PANTHER" id="PTHR30305">
    <property type="entry name" value="PROTEIN YJDM-RELATED"/>
    <property type="match status" value="1"/>
</dbReference>
<dbReference type="Pfam" id="PF07475">
    <property type="entry name" value="Hpr_kinase_C"/>
    <property type="match status" value="1"/>
</dbReference>
<dbReference type="Pfam" id="PF02603">
    <property type="entry name" value="Hpr_kinase_N"/>
    <property type="match status" value="1"/>
</dbReference>
<dbReference type="SUPFAM" id="SSF75138">
    <property type="entry name" value="HprK N-terminal domain-like"/>
    <property type="match status" value="1"/>
</dbReference>
<dbReference type="SUPFAM" id="SSF53795">
    <property type="entry name" value="PEP carboxykinase-like"/>
    <property type="match status" value="1"/>
</dbReference>